<protein>
    <recommendedName>
        <fullName evidence="1">2-C-methyl-D-erythritol 2,4-cyclodiphosphate synthase</fullName>
        <shortName evidence="1">MECDP-synthase</shortName>
        <shortName evidence="1">MECPP-synthase</shortName>
        <shortName evidence="1">MECPS</shortName>
        <ecNumber evidence="1">4.6.1.12</ecNumber>
    </recommendedName>
</protein>
<name>ISPF_ECOLC</name>
<proteinExistence type="inferred from homology"/>
<reference key="1">
    <citation type="submission" date="2008-02" db="EMBL/GenBank/DDBJ databases">
        <title>Complete sequence of Escherichia coli C str. ATCC 8739.</title>
        <authorList>
            <person name="Copeland A."/>
            <person name="Lucas S."/>
            <person name="Lapidus A."/>
            <person name="Glavina del Rio T."/>
            <person name="Dalin E."/>
            <person name="Tice H."/>
            <person name="Bruce D."/>
            <person name="Goodwin L."/>
            <person name="Pitluck S."/>
            <person name="Kiss H."/>
            <person name="Brettin T."/>
            <person name="Detter J.C."/>
            <person name="Han C."/>
            <person name="Kuske C.R."/>
            <person name="Schmutz J."/>
            <person name="Larimer F."/>
            <person name="Land M."/>
            <person name="Hauser L."/>
            <person name="Kyrpides N."/>
            <person name="Mikhailova N."/>
            <person name="Ingram L."/>
            <person name="Richardson P."/>
        </authorList>
    </citation>
    <scope>NUCLEOTIDE SEQUENCE [LARGE SCALE GENOMIC DNA]</scope>
    <source>
        <strain>ATCC 8739 / DSM 1576 / NBRC 3972 / NCIMB 8545 / WDCM 00012 / Crooks</strain>
    </source>
</reference>
<organism>
    <name type="scientific">Escherichia coli (strain ATCC 8739 / DSM 1576 / NBRC 3972 / NCIMB 8545 / WDCM 00012 / Crooks)</name>
    <dbReference type="NCBI Taxonomy" id="481805"/>
    <lineage>
        <taxon>Bacteria</taxon>
        <taxon>Pseudomonadati</taxon>
        <taxon>Pseudomonadota</taxon>
        <taxon>Gammaproteobacteria</taxon>
        <taxon>Enterobacterales</taxon>
        <taxon>Enterobacteriaceae</taxon>
        <taxon>Escherichia</taxon>
    </lineage>
</organism>
<evidence type="ECO:0000255" key="1">
    <source>
        <dbReference type="HAMAP-Rule" id="MF_00107"/>
    </source>
</evidence>
<keyword id="KW-0414">Isoprene biosynthesis</keyword>
<keyword id="KW-0456">Lyase</keyword>
<keyword id="KW-0479">Metal-binding</keyword>
<gene>
    <name evidence="1" type="primary">ispF</name>
    <name type="ordered locus">EcolC_0966</name>
</gene>
<comment type="function">
    <text evidence="1">Involved in the biosynthesis of isopentenyl diphosphate (IPP) and dimethylallyl diphosphate (DMAPP), two major building blocks of isoprenoid compounds. Catalyzes the conversion of 4-diphosphocytidyl-2-C-methyl-D-erythritol 2-phosphate (CDP-ME2P) to 2-C-methyl-D-erythritol 2,4-cyclodiphosphate (ME-CPP) with a corresponding release of cytidine 5-monophosphate (CMP).</text>
</comment>
<comment type="catalytic activity">
    <reaction evidence="1">
        <text>4-CDP-2-C-methyl-D-erythritol 2-phosphate = 2-C-methyl-D-erythritol 2,4-cyclic diphosphate + CMP</text>
        <dbReference type="Rhea" id="RHEA:23864"/>
        <dbReference type="ChEBI" id="CHEBI:57919"/>
        <dbReference type="ChEBI" id="CHEBI:58483"/>
        <dbReference type="ChEBI" id="CHEBI:60377"/>
        <dbReference type="EC" id="4.6.1.12"/>
    </reaction>
</comment>
<comment type="cofactor">
    <cofactor evidence="1">
        <name>a divalent metal cation</name>
        <dbReference type="ChEBI" id="CHEBI:60240"/>
    </cofactor>
    <text evidence="1">Binds 1 divalent metal cation per subunit.</text>
</comment>
<comment type="pathway">
    <text evidence="1">Isoprenoid biosynthesis; isopentenyl diphosphate biosynthesis via DXP pathway; isopentenyl diphosphate from 1-deoxy-D-xylulose 5-phosphate: step 4/6.</text>
</comment>
<comment type="subunit">
    <text evidence="1">Homotrimer.</text>
</comment>
<comment type="similarity">
    <text evidence="1">Belongs to the IspF family.</text>
</comment>
<dbReference type="EC" id="4.6.1.12" evidence="1"/>
<dbReference type="EMBL" id="CP000946">
    <property type="protein sequence ID" value="ACA76635.1"/>
    <property type="molecule type" value="Genomic_DNA"/>
</dbReference>
<dbReference type="RefSeq" id="WP_001219242.1">
    <property type="nucleotide sequence ID" value="NZ_MTFT01000049.1"/>
</dbReference>
<dbReference type="SMR" id="B1IUT3"/>
<dbReference type="GeneID" id="93779260"/>
<dbReference type="KEGG" id="ecl:EcolC_0966"/>
<dbReference type="HOGENOM" id="CLU_084630_2_0_6"/>
<dbReference type="UniPathway" id="UPA00056">
    <property type="reaction ID" value="UER00095"/>
</dbReference>
<dbReference type="GO" id="GO:0008685">
    <property type="term" value="F:2-C-methyl-D-erythritol 2,4-cyclodiphosphate synthase activity"/>
    <property type="evidence" value="ECO:0007669"/>
    <property type="project" value="UniProtKB-UniRule"/>
</dbReference>
<dbReference type="GO" id="GO:0046872">
    <property type="term" value="F:metal ion binding"/>
    <property type="evidence" value="ECO:0007669"/>
    <property type="project" value="UniProtKB-KW"/>
</dbReference>
<dbReference type="GO" id="GO:0019288">
    <property type="term" value="P:isopentenyl diphosphate biosynthetic process, methylerythritol 4-phosphate pathway"/>
    <property type="evidence" value="ECO:0007669"/>
    <property type="project" value="UniProtKB-UniRule"/>
</dbReference>
<dbReference type="GO" id="GO:0016114">
    <property type="term" value="P:terpenoid biosynthetic process"/>
    <property type="evidence" value="ECO:0007669"/>
    <property type="project" value="InterPro"/>
</dbReference>
<dbReference type="CDD" id="cd00554">
    <property type="entry name" value="MECDP_synthase"/>
    <property type="match status" value="1"/>
</dbReference>
<dbReference type="FunFam" id="3.30.1330.50:FF:000001">
    <property type="entry name" value="2-C-methyl-D-erythritol 2,4-cyclodiphosphate synthase"/>
    <property type="match status" value="1"/>
</dbReference>
<dbReference type="Gene3D" id="3.30.1330.50">
    <property type="entry name" value="2-C-methyl-D-erythritol 2,4-cyclodiphosphate synthase"/>
    <property type="match status" value="1"/>
</dbReference>
<dbReference type="HAMAP" id="MF_00107">
    <property type="entry name" value="IspF"/>
    <property type="match status" value="1"/>
</dbReference>
<dbReference type="InterPro" id="IPR003526">
    <property type="entry name" value="MECDP_synthase"/>
</dbReference>
<dbReference type="InterPro" id="IPR020555">
    <property type="entry name" value="MECDP_synthase_CS"/>
</dbReference>
<dbReference type="InterPro" id="IPR036571">
    <property type="entry name" value="MECDP_synthase_sf"/>
</dbReference>
<dbReference type="NCBIfam" id="TIGR00151">
    <property type="entry name" value="ispF"/>
    <property type="match status" value="1"/>
</dbReference>
<dbReference type="PANTHER" id="PTHR43181">
    <property type="entry name" value="2-C-METHYL-D-ERYTHRITOL 2,4-CYCLODIPHOSPHATE SYNTHASE, CHLOROPLASTIC"/>
    <property type="match status" value="1"/>
</dbReference>
<dbReference type="PANTHER" id="PTHR43181:SF1">
    <property type="entry name" value="2-C-METHYL-D-ERYTHRITOL 2,4-CYCLODIPHOSPHATE SYNTHASE, CHLOROPLASTIC"/>
    <property type="match status" value="1"/>
</dbReference>
<dbReference type="Pfam" id="PF02542">
    <property type="entry name" value="YgbB"/>
    <property type="match status" value="1"/>
</dbReference>
<dbReference type="SUPFAM" id="SSF69765">
    <property type="entry name" value="IpsF-like"/>
    <property type="match status" value="1"/>
</dbReference>
<dbReference type="PROSITE" id="PS01350">
    <property type="entry name" value="ISPF"/>
    <property type="match status" value="1"/>
</dbReference>
<feature type="chain" id="PRO_1000075911" description="2-C-methyl-D-erythritol 2,4-cyclodiphosphate synthase">
    <location>
        <begin position="1"/>
        <end position="159"/>
    </location>
</feature>
<feature type="binding site" evidence="1">
    <location>
        <begin position="8"/>
        <end position="10"/>
    </location>
    <ligand>
        <name>4-CDP-2-C-methyl-D-erythritol 2-phosphate</name>
        <dbReference type="ChEBI" id="CHEBI:57919"/>
    </ligand>
</feature>
<feature type="binding site" evidence="1">
    <location>
        <position position="8"/>
    </location>
    <ligand>
        <name>a divalent metal cation</name>
        <dbReference type="ChEBI" id="CHEBI:60240"/>
    </ligand>
</feature>
<feature type="binding site" evidence="1">
    <location>
        <position position="10"/>
    </location>
    <ligand>
        <name>a divalent metal cation</name>
        <dbReference type="ChEBI" id="CHEBI:60240"/>
    </ligand>
</feature>
<feature type="binding site" evidence="1">
    <location>
        <begin position="34"/>
        <end position="35"/>
    </location>
    <ligand>
        <name>4-CDP-2-C-methyl-D-erythritol 2-phosphate</name>
        <dbReference type="ChEBI" id="CHEBI:57919"/>
    </ligand>
</feature>
<feature type="binding site" evidence="1">
    <location>
        <position position="42"/>
    </location>
    <ligand>
        <name>a divalent metal cation</name>
        <dbReference type="ChEBI" id="CHEBI:60240"/>
    </ligand>
</feature>
<feature type="binding site" evidence="1">
    <location>
        <begin position="56"/>
        <end position="58"/>
    </location>
    <ligand>
        <name>4-CDP-2-C-methyl-D-erythritol 2-phosphate</name>
        <dbReference type="ChEBI" id="CHEBI:57919"/>
    </ligand>
</feature>
<feature type="binding site" evidence="1">
    <location>
        <begin position="61"/>
        <end position="65"/>
    </location>
    <ligand>
        <name>4-CDP-2-C-methyl-D-erythritol 2-phosphate</name>
        <dbReference type="ChEBI" id="CHEBI:57919"/>
    </ligand>
</feature>
<feature type="binding site" evidence="1">
    <location>
        <begin position="100"/>
        <end position="106"/>
    </location>
    <ligand>
        <name>4-CDP-2-C-methyl-D-erythritol 2-phosphate</name>
        <dbReference type="ChEBI" id="CHEBI:57919"/>
    </ligand>
</feature>
<feature type="binding site" evidence="1">
    <location>
        <begin position="132"/>
        <end position="135"/>
    </location>
    <ligand>
        <name>4-CDP-2-C-methyl-D-erythritol 2-phosphate</name>
        <dbReference type="ChEBI" id="CHEBI:57919"/>
    </ligand>
</feature>
<feature type="binding site" evidence="1">
    <location>
        <position position="139"/>
    </location>
    <ligand>
        <name>4-CDP-2-C-methyl-D-erythritol 2-phosphate</name>
        <dbReference type="ChEBI" id="CHEBI:57919"/>
    </ligand>
</feature>
<feature type="binding site" evidence="1">
    <location>
        <position position="142"/>
    </location>
    <ligand>
        <name>4-CDP-2-C-methyl-D-erythritol 2-phosphate</name>
        <dbReference type="ChEBI" id="CHEBI:57919"/>
    </ligand>
</feature>
<feature type="site" description="Transition state stabilizer" evidence="1">
    <location>
        <position position="34"/>
    </location>
</feature>
<feature type="site" description="Transition state stabilizer" evidence="1">
    <location>
        <position position="133"/>
    </location>
</feature>
<sequence>MRIGHGFDVHAFGGEGPIIIGGVRIPYEKGLLAHSDGDVALHALTDALLGAAALGDIGKLFPDTDPAFKGADSRELLREAWRRIQAKGYTLGNVDVTIIAQAPKMLPHIPQMRVFIAEDLGCHMDDVNVKATTTEKLGFTGRGEGIACEAVALLIKATK</sequence>
<accession>B1IUT3</accession>